<dbReference type="EC" id="4.2.1.49" evidence="1"/>
<dbReference type="EMBL" id="AM933173">
    <property type="protein sequence ID" value="CAR36664.1"/>
    <property type="molecule type" value="Genomic_DNA"/>
</dbReference>
<dbReference type="RefSeq" id="WP_001115191.1">
    <property type="nucleotide sequence ID" value="NC_011274.1"/>
</dbReference>
<dbReference type="SMR" id="B5R757"/>
<dbReference type="KEGG" id="seg:SG0768"/>
<dbReference type="HOGENOM" id="CLU_018868_0_1_6"/>
<dbReference type="UniPathway" id="UPA00379">
    <property type="reaction ID" value="UER00550"/>
</dbReference>
<dbReference type="Proteomes" id="UP000008321">
    <property type="component" value="Chromosome"/>
</dbReference>
<dbReference type="GO" id="GO:0005737">
    <property type="term" value="C:cytoplasm"/>
    <property type="evidence" value="ECO:0007669"/>
    <property type="project" value="UniProtKB-SubCell"/>
</dbReference>
<dbReference type="GO" id="GO:0016153">
    <property type="term" value="F:urocanate hydratase activity"/>
    <property type="evidence" value="ECO:0007669"/>
    <property type="project" value="UniProtKB-UniRule"/>
</dbReference>
<dbReference type="GO" id="GO:0019556">
    <property type="term" value="P:L-histidine catabolic process to glutamate and formamide"/>
    <property type="evidence" value="ECO:0007669"/>
    <property type="project" value="UniProtKB-UniPathway"/>
</dbReference>
<dbReference type="GO" id="GO:0019557">
    <property type="term" value="P:L-histidine catabolic process to glutamate and formate"/>
    <property type="evidence" value="ECO:0007669"/>
    <property type="project" value="UniProtKB-UniPathway"/>
</dbReference>
<dbReference type="FunFam" id="3.40.50.10730:FF:000001">
    <property type="entry name" value="Urocanate hydratase"/>
    <property type="match status" value="1"/>
</dbReference>
<dbReference type="Gene3D" id="3.40.50.10730">
    <property type="entry name" value="Urocanase like domains"/>
    <property type="match status" value="1"/>
</dbReference>
<dbReference type="Gene3D" id="3.40.1770.10">
    <property type="entry name" value="Urocanase superfamily"/>
    <property type="match status" value="1"/>
</dbReference>
<dbReference type="HAMAP" id="MF_00577">
    <property type="entry name" value="HutU"/>
    <property type="match status" value="1"/>
</dbReference>
<dbReference type="InterPro" id="IPR055351">
    <property type="entry name" value="Urocanase"/>
</dbReference>
<dbReference type="InterPro" id="IPR023637">
    <property type="entry name" value="Urocanase-like"/>
</dbReference>
<dbReference type="InterPro" id="IPR035401">
    <property type="entry name" value="Urocanase_C"/>
</dbReference>
<dbReference type="InterPro" id="IPR038364">
    <property type="entry name" value="Urocanase_central_sf"/>
</dbReference>
<dbReference type="InterPro" id="IPR023636">
    <property type="entry name" value="Urocanase_CS"/>
</dbReference>
<dbReference type="InterPro" id="IPR035400">
    <property type="entry name" value="Urocanase_N"/>
</dbReference>
<dbReference type="InterPro" id="IPR035085">
    <property type="entry name" value="Urocanase_Rossmann-like"/>
</dbReference>
<dbReference type="InterPro" id="IPR036190">
    <property type="entry name" value="Urocanase_sf"/>
</dbReference>
<dbReference type="NCBIfam" id="TIGR01228">
    <property type="entry name" value="hutU"/>
    <property type="match status" value="1"/>
</dbReference>
<dbReference type="NCBIfam" id="NF003820">
    <property type="entry name" value="PRK05414.1"/>
    <property type="match status" value="1"/>
</dbReference>
<dbReference type="PANTHER" id="PTHR12216">
    <property type="entry name" value="UROCANATE HYDRATASE"/>
    <property type="match status" value="1"/>
</dbReference>
<dbReference type="PANTHER" id="PTHR12216:SF4">
    <property type="entry name" value="UROCANATE HYDRATASE"/>
    <property type="match status" value="1"/>
</dbReference>
<dbReference type="Pfam" id="PF01175">
    <property type="entry name" value="Urocanase"/>
    <property type="match status" value="1"/>
</dbReference>
<dbReference type="Pfam" id="PF17392">
    <property type="entry name" value="Urocanase_C"/>
    <property type="match status" value="1"/>
</dbReference>
<dbReference type="Pfam" id="PF17391">
    <property type="entry name" value="Urocanase_N"/>
    <property type="match status" value="1"/>
</dbReference>
<dbReference type="PIRSF" id="PIRSF001423">
    <property type="entry name" value="Urocanate_hydrat"/>
    <property type="match status" value="1"/>
</dbReference>
<dbReference type="SUPFAM" id="SSF111326">
    <property type="entry name" value="Urocanase"/>
    <property type="match status" value="1"/>
</dbReference>
<dbReference type="PROSITE" id="PS01233">
    <property type="entry name" value="UROCANASE"/>
    <property type="match status" value="1"/>
</dbReference>
<comment type="function">
    <text evidence="1">Catalyzes the conversion of urocanate to 4-imidazolone-5-propionate.</text>
</comment>
<comment type="catalytic activity">
    <reaction evidence="1">
        <text>4-imidazolone-5-propanoate = trans-urocanate + H2O</text>
        <dbReference type="Rhea" id="RHEA:13101"/>
        <dbReference type="ChEBI" id="CHEBI:15377"/>
        <dbReference type="ChEBI" id="CHEBI:17771"/>
        <dbReference type="ChEBI" id="CHEBI:77893"/>
        <dbReference type="EC" id="4.2.1.49"/>
    </reaction>
</comment>
<comment type="cofactor">
    <cofactor evidence="1">
        <name>NAD(+)</name>
        <dbReference type="ChEBI" id="CHEBI:57540"/>
    </cofactor>
    <text evidence="1">Binds 1 NAD(+) per subunit.</text>
</comment>
<comment type="pathway">
    <text evidence="1">Amino-acid degradation; L-histidine degradation into L-glutamate; N-formimidoyl-L-glutamate from L-histidine: step 2/3.</text>
</comment>
<comment type="subcellular location">
    <subcellularLocation>
        <location evidence="1">Cytoplasm</location>
    </subcellularLocation>
</comment>
<comment type="similarity">
    <text evidence="1">Belongs to the urocanase family.</text>
</comment>
<sequence length="561" mass="61385">MPESKYRQQTIRAPRGTVLTAKSWLTEAPLRMLMNNLDPDVAENPHELVVYGGIGRAARNWECYDAIVDALTRLEADETLLIQSGKPVGVFKTHDNAPRVLIANSNLAPHWATWEHFNELDAKGLAMYGQMTAGSWIYIGSQGIVQGTYETFVEAGCQHYNGTLAGRWVLTAGLGGMGGAQPLAATLAGACSLTIECQQSRIDFRLRTRYVDEQAATLDDALARITRYTREGKAVSVALCANAADILPELVNRGVRPDLVTDQTSAHDPLHGYLPSGWRWEEYQKNAQSDPHGTMQAAKRSMAAHVRAMLAFSKMGVPTFDYGNNIRQMAKEMGVENAFDFPGFVPAYIRPLFCRGIGPFRWVALSGDPQDIYKTDAKVKEIVAEDKHLHHWLDMARERIHFQGLPARICWVGLEWRQKLGLAFNEMVRCGEVSAPIVIGRDHLDSGSVASPNRETEAMRDGSDAVSDWPLLNALLNTASGATWVSLHHGGGVGMGFSQHAGMVIVCDGTDEAAARIRRVLHNDPATGVMRHADAGYDLAVECAVEQGLNLPMVAATQGKG</sequence>
<protein>
    <recommendedName>
        <fullName evidence="1">Urocanate hydratase</fullName>
        <shortName evidence="1">Urocanase</shortName>
        <ecNumber evidence="1">4.2.1.49</ecNumber>
    </recommendedName>
    <alternativeName>
        <fullName evidence="1">Imidazolonepropionate hydrolase</fullName>
    </alternativeName>
</protein>
<reference key="1">
    <citation type="journal article" date="2008" name="Genome Res.">
        <title>Comparative genome analysis of Salmonella enteritidis PT4 and Salmonella gallinarum 287/91 provides insights into evolutionary and host adaptation pathways.</title>
        <authorList>
            <person name="Thomson N.R."/>
            <person name="Clayton D.J."/>
            <person name="Windhorst D."/>
            <person name="Vernikos G."/>
            <person name="Davidson S."/>
            <person name="Churcher C."/>
            <person name="Quail M.A."/>
            <person name="Stevens M."/>
            <person name="Jones M.A."/>
            <person name="Watson M."/>
            <person name="Barron A."/>
            <person name="Layton A."/>
            <person name="Pickard D."/>
            <person name="Kingsley R.A."/>
            <person name="Bignell A."/>
            <person name="Clark L."/>
            <person name="Harris B."/>
            <person name="Ormond D."/>
            <person name="Abdellah Z."/>
            <person name="Brooks K."/>
            <person name="Cherevach I."/>
            <person name="Chillingworth T."/>
            <person name="Woodward J."/>
            <person name="Norberczak H."/>
            <person name="Lord A."/>
            <person name="Arrowsmith C."/>
            <person name="Jagels K."/>
            <person name="Moule S."/>
            <person name="Mungall K."/>
            <person name="Saunders M."/>
            <person name="Whitehead S."/>
            <person name="Chabalgoity J.A."/>
            <person name="Maskell D."/>
            <person name="Humphreys T."/>
            <person name="Roberts M."/>
            <person name="Barrow P.A."/>
            <person name="Dougan G."/>
            <person name="Parkhill J."/>
        </authorList>
    </citation>
    <scope>NUCLEOTIDE SEQUENCE [LARGE SCALE GENOMIC DNA]</scope>
    <source>
        <strain>287/91 / NCTC 13346</strain>
    </source>
</reference>
<evidence type="ECO:0000255" key="1">
    <source>
        <dbReference type="HAMAP-Rule" id="MF_00577"/>
    </source>
</evidence>
<accession>B5R757</accession>
<gene>
    <name evidence="1" type="primary">hutU</name>
    <name type="ordered locus">SG0768</name>
</gene>
<organism>
    <name type="scientific">Salmonella gallinarum (strain 287/91 / NCTC 13346)</name>
    <dbReference type="NCBI Taxonomy" id="550538"/>
    <lineage>
        <taxon>Bacteria</taxon>
        <taxon>Pseudomonadati</taxon>
        <taxon>Pseudomonadota</taxon>
        <taxon>Gammaproteobacteria</taxon>
        <taxon>Enterobacterales</taxon>
        <taxon>Enterobacteriaceae</taxon>
        <taxon>Salmonella</taxon>
    </lineage>
</organism>
<proteinExistence type="inferred from homology"/>
<name>HUTU_SALG2</name>
<feature type="chain" id="PRO_1000129572" description="Urocanate hydratase">
    <location>
        <begin position="1"/>
        <end position="561"/>
    </location>
</feature>
<feature type="active site" evidence="1">
    <location>
        <position position="410"/>
    </location>
</feature>
<feature type="binding site" evidence="1">
    <location>
        <begin position="52"/>
        <end position="53"/>
    </location>
    <ligand>
        <name>NAD(+)</name>
        <dbReference type="ChEBI" id="CHEBI:57540"/>
    </ligand>
</feature>
<feature type="binding site" evidence="1">
    <location>
        <position position="130"/>
    </location>
    <ligand>
        <name>NAD(+)</name>
        <dbReference type="ChEBI" id="CHEBI:57540"/>
    </ligand>
</feature>
<feature type="binding site" evidence="1">
    <location>
        <begin position="176"/>
        <end position="178"/>
    </location>
    <ligand>
        <name>NAD(+)</name>
        <dbReference type="ChEBI" id="CHEBI:57540"/>
    </ligand>
</feature>
<feature type="binding site" evidence="1">
    <location>
        <position position="196"/>
    </location>
    <ligand>
        <name>NAD(+)</name>
        <dbReference type="ChEBI" id="CHEBI:57540"/>
    </ligand>
</feature>
<feature type="binding site" evidence="1">
    <location>
        <position position="201"/>
    </location>
    <ligand>
        <name>NAD(+)</name>
        <dbReference type="ChEBI" id="CHEBI:57540"/>
    </ligand>
</feature>
<feature type="binding site" evidence="1">
    <location>
        <begin position="242"/>
        <end position="243"/>
    </location>
    <ligand>
        <name>NAD(+)</name>
        <dbReference type="ChEBI" id="CHEBI:57540"/>
    </ligand>
</feature>
<feature type="binding site" evidence="1">
    <location>
        <begin position="263"/>
        <end position="267"/>
    </location>
    <ligand>
        <name>NAD(+)</name>
        <dbReference type="ChEBI" id="CHEBI:57540"/>
    </ligand>
</feature>
<feature type="binding site" evidence="1">
    <location>
        <begin position="273"/>
        <end position="274"/>
    </location>
    <ligand>
        <name>NAD(+)</name>
        <dbReference type="ChEBI" id="CHEBI:57540"/>
    </ligand>
</feature>
<feature type="binding site" evidence="1">
    <location>
        <position position="322"/>
    </location>
    <ligand>
        <name>NAD(+)</name>
        <dbReference type="ChEBI" id="CHEBI:57540"/>
    </ligand>
</feature>
<feature type="binding site" evidence="1">
    <location>
        <position position="492"/>
    </location>
    <ligand>
        <name>NAD(+)</name>
        <dbReference type="ChEBI" id="CHEBI:57540"/>
    </ligand>
</feature>
<keyword id="KW-0963">Cytoplasm</keyword>
<keyword id="KW-0369">Histidine metabolism</keyword>
<keyword id="KW-0456">Lyase</keyword>
<keyword id="KW-0520">NAD</keyword>